<evidence type="ECO:0000255" key="1">
    <source>
        <dbReference type="HAMAP-Rule" id="MF_01350"/>
    </source>
</evidence>
<protein>
    <recommendedName>
        <fullName evidence="1">NADH-quinone oxidoreductase subunit H</fullName>
        <ecNumber evidence="1">7.1.1.-</ecNumber>
    </recommendedName>
    <alternativeName>
        <fullName evidence="1">NADH dehydrogenase I subunit H</fullName>
    </alternativeName>
    <alternativeName>
        <fullName evidence="1">NDH-1 subunit H</fullName>
    </alternativeName>
</protein>
<proteinExistence type="inferred from homology"/>
<keyword id="KW-0997">Cell inner membrane</keyword>
<keyword id="KW-1003">Cell membrane</keyword>
<keyword id="KW-0472">Membrane</keyword>
<keyword id="KW-0520">NAD</keyword>
<keyword id="KW-0874">Quinone</keyword>
<keyword id="KW-1185">Reference proteome</keyword>
<keyword id="KW-1278">Translocase</keyword>
<keyword id="KW-0812">Transmembrane</keyword>
<keyword id="KW-1133">Transmembrane helix</keyword>
<keyword id="KW-0830">Ubiquinone</keyword>
<dbReference type="EC" id="7.1.1.-" evidence="1"/>
<dbReference type="EMBL" id="CP000038">
    <property type="protein sequence ID" value="AAZ88984.1"/>
    <property type="molecule type" value="Genomic_DNA"/>
</dbReference>
<dbReference type="RefSeq" id="WP_000118507.1">
    <property type="nucleotide sequence ID" value="NC_007384.1"/>
</dbReference>
<dbReference type="SMR" id="Q3YZS8"/>
<dbReference type="GeneID" id="93774892"/>
<dbReference type="KEGG" id="ssn:SSON_2339"/>
<dbReference type="HOGENOM" id="CLU_015134_0_1_6"/>
<dbReference type="Proteomes" id="UP000002529">
    <property type="component" value="Chromosome"/>
</dbReference>
<dbReference type="GO" id="GO:0005886">
    <property type="term" value="C:plasma membrane"/>
    <property type="evidence" value="ECO:0007669"/>
    <property type="project" value="UniProtKB-SubCell"/>
</dbReference>
<dbReference type="GO" id="GO:0003954">
    <property type="term" value="F:NADH dehydrogenase activity"/>
    <property type="evidence" value="ECO:0007669"/>
    <property type="project" value="TreeGrafter"/>
</dbReference>
<dbReference type="GO" id="GO:0016655">
    <property type="term" value="F:oxidoreductase activity, acting on NAD(P)H, quinone or similar compound as acceptor"/>
    <property type="evidence" value="ECO:0007669"/>
    <property type="project" value="UniProtKB-UniRule"/>
</dbReference>
<dbReference type="GO" id="GO:0048038">
    <property type="term" value="F:quinone binding"/>
    <property type="evidence" value="ECO:0007669"/>
    <property type="project" value="UniProtKB-KW"/>
</dbReference>
<dbReference type="GO" id="GO:0009060">
    <property type="term" value="P:aerobic respiration"/>
    <property type="evidence" value="ECO:0007669"/>
    <property type="project" value="TreeGrafter"/>
</dbReference>
<dbReference type="HAMAP" id="MF_01350">
    <property type="entry name" value="NDH1_NuoH"/>
    <property type="match status" value="1"/>
</dbReference>
<dbReference type="InterPro" id="IPR001694">
    <property type="entry name" value="NADH_UbQ_OxRdtase_su1/FPO"/>
</dbReference>
<dbReference type="InterPro" id="IPR018086">
    <property type="entry name" value="NADH_UbQ_OxRdtase_su1_CS"/>
</dbReference>
<dbReference type="NCBIfam" id="NF004740">
    <property type="entry name" value="PRK06076.1-1"/>
    <property type="match status" value="1"/>
</dbReference>
<dbReference type="NCBIfam" id="NF004741">
    <property type="entry name" value="PRK06076.1-2"/>
    <property type="match status" value="1"/>
</dbReference>
<dbReference type="PANTHER" id="PTHR11432">
    <property type="entry name" value="NADH DEHYDROGENASE SUBUNIT 1"/>
    <property type="match status" value="1"/>
</dbReference>
<dbReference type="PANTHER" id="PTHR11432:SF3">
    <property type="entry name" value="NADH-UBIQUINONE OXIDOREDUCTASE CHAIN 1"/>
    <property type="match status" value="1"/>
</dbReference>
<dbReference type="Pfam" id="PF00146">
    <property type="entry name" value="NADHdh"/>
    <property type="match status" value="1"/>
</dbReference>
<dbReference type="PROSITE" id="PS00667">
    <property type="entry name" value="COMPLEX1_ND1_1"/>
    <property type="match status" value="1"/>
</dbReference>
<dbReference type="PROSITE" id="PS00668">
    <property type="entry name" value="COMPLEX1_ND1_2"/>
    <property type="match status" value="1"/>
</dbReference>
<name>NUOH_SHISS</name>
<organism>
    <name type="scientific">Shigella sonnei (strain Ss046)</name>
    <dbReference type="NCBI Taxonomy" id="300269"/>
    <lineage>
        <taxon>Bacteria</taxon>
        <taxon>Pseudomonadati</taxon>
        <taxon>Pseudomonadota</taxon>
        <taxon>Gammaproteobacteria</taxon>
        <taxon>Enterobacterales</taxon>
        <taxon>Enterobacteriaceae</taxon>
        <taxon>Shigella</taxon>
    </lineage>
</organism>
<gene>
    <name evidence="1" type="primary">nuoH</name>
    <name type="ordered locus">SSON_2339</name>
</gene>
<reference key="1">
    <citation type="journal article" date="2005" name="Nucleic Acids Res.">
        <title>Genome dynamics and diversity of Shigella species, the etiologic agents of bacillary dysentery.</title>
        <authorList>
            <person name="Yang F."/>
            <person name="Yang J."/>
            <person name="Zhang X."/>
            <person name="Chen L."/>
            <person name="Jiang Y."/>
            <person name="Yan Y."/>
            <person name="Tang X."/>
            <person name="Wang J."/>
            <person name="Xiong Z."/>
            <person name="Dong J."/>
            <person name="Xue Y."/>
            <person name="Zhu Y."/>
            <person name="Xu X."/>
            <person name="Sun L."/>
            <person name="Chen S."/>
            <person name="Nie H."/>
            <person name="Peng J."/>
            <person name="Xu J."/>
            <person name="Wang Y."/>
            <person name="Yuan Z."/>
            <person name="Wen Y."/>
            <person name="Yao Z."/>
            <person name="Shen Y."/>
            <person name="Qiang B."/>
            <person name="Hou Y."/>
            <person name="Yu J."/>
            <person name="Jin Q."/>
        </authorList>
    </citation>
    <scope>NUCLEOTIDE SEQUENCE [LARGE SCALE GENOMIC DNA]</scope>
    <source>
        <strain>Ss046</strain>
    </source>
</reference>
<accession>Q3YZS8</accession>
<comment type="function">
    <text evidence="1">NDH-1 shuttles electrons from NADH, via FMN and iron-sulfur (Fe-S) centers, to quinones in the respiratory chain. The immediate electron acceptor for the enzyme in this species is believed to be ubiquinone. Couples the redox reaction to proton translocation (for every two electrons transferred, four hydrogen ions are translocated across the cytoplasmic membrane), and thus conserves the redox energy in a proton gradient. This subunit may bind ubiquinone.</text>
</comment>
<comment type="catalytic activity">
    <reaction evidence="1">
        <text>a quinone + NADH + 5 H(+)(in) = a quinol + NAD(+) + 4 H(+)(out)</text>
        <dbReference type="Rhea" id="RHEA:57888"/>
        <dbReference type="ChEBI" id="CHEBI:15378"/>
        <dbReference type="ChEBI" id="CHEBI:24646"/>
        <dbReference type="ChEBI" id="CHEBI:57540"/>
        <dbReference type="ChEBI" id="CHEBI:57945"/>
        <dbReference type="ChEBI" id="CHEBI:132124"/>
    </reaction>
</comment>
<comment type="subunit">
    <text evidence="1">NDH-1 is composed of 13 different subunits. Subunits NuoA, H, J, K, L, M, N constitute the membrane sector of the complex.</text>
</comment>
<comment type="subcellular location">
    <subcellularLocation>
        <location evidence="1">Cell inner membrane</location>
        <topology evidence="1">Multi-pass membrane protein</topology>
    </subcellularLocation>
</comment>
<comment type="similarity">
    <text evidence="1">Belongs to the complex I subunit 1 family.</text>
</comment>
<feature type="chain" id="PRO_0000244955" description="NADH-quinone oxidoreductase subunit H">
    <location>
        <begin position="1"/>
        <end position="325"/>
    </location>
</feature>
<feature type="transmembrane region" description="Helical" evidence="1">
    <location>
        <begin position="11"/>
        <end position="31"/>
    </location>
</feature>
<feature type="transmembrane region" description="Helical" evidence="1">
    <location>
        <begin position="81"/>
        <end position="101"/>
    </location>
</feature>
<feature type="transmembrane region" description="Helical" evidence="1">
    <location>
        <begin position="114"/>
        <end position="134"/>
    </location>
</feature>
<feature type="transmembrane region" description="Helical" evidence="1">
    <location>
        <begin position="154"/>
        <end position="174"/>
    </location>
</feature>
<feature type="transmembrane region" description="Helical" evidence="1">
    <location>
        <begin position="186"/>
        <end position="206"/>
    </location>
</feature>
<feature type="transmembrane region" description="Helical" evidence="1">
    <location>
        <begin position="237"/>
        <end position="257"/>
    </location>
</feature>
<feature type="transmembrane region" description="Helical" evidence="1">
    <location>
        <begin position="265"/>
        <end position="285"/>
    </location>
</feature>
<feature type="transmembrane region" description="Helical" evidence="1">
    <location>
        <begin position="304"/>
        <end position="324"/>
    </location>
</feature>
<sequence length="325" mass="36219">MSWISPELIEILLTILKAVVILLVVVTCGAFMSFGERRLLGLFQNRYGPNRVGWGGSLQLVADMIKMFFKEDWIPKFSDRVIFTLAPMIAFTSLLLAFAIVPVSPGWVVADLNIGILFFLMMAGLAVYAVLFAGWSSNNKYSLLGAMRASAQTLSYEVFLGLSLMGVVAQAGSFNMTDIVNSQAHVWNVIPQFFGFITFAIAGVAVCHRHPFDQPEAEQELADGYHIEYSGMKFGLFFVGEYIGIVTISALMVTLFFGGWQGPLLPPFIWFALKTAFFMMMFILIRASLPRPRYDQVMSFGWKICLPLTLINLLVTAAVILWQAQ</sequence>